<sequence>MNEARARIIINLRLSMDSLMRVFSHRSPPPSFGFACDVGAHPSSTAQNLPMTYGSVREMIDDFSIVFGVPKYRTSKPKKVTRKFSFTRLLQPIDNLVTCPACSNIHPSDTICDACYAKVHQLTSEIKKKMMQYNPYVGEKQDKEVYVKFRGEPDAPAAVVKGKRVLEIEKERPTWFKKLTLKE</sequence>
<evidence type="ECO:0000250" key="1">
    <source>
        <dbReference type="UniProtKB" id="Q9BYC8"/>
    </source>
</evidence>
<evidence type="ECO:0000255" key="2"/>
<evidence type="ECO:0000305" key="3"/>
<proteinExistence type="inferred from homology"/>
<protein>
    <recommendedName>
        <fullName evidence="3">Large ribosomal subunit protein bL32m</fullName>
    </recommendedName>
    <alternativeName>
        <fullName evidence="3">39S ribosomal protein L32, mitochondrial</fullName>
        <shortName>L32mt</shortName>
        <shortName>MRP-L32</shortName>
    </alternativeName>
</protein>
<dbReference type="EMBL" id="FO080722">
    <property type="protein sequence ID" value="CCD66157.2"/>
    <property type="molecule type" value="Genomic_DNA"/>
</dbReference>
<dbReference type="PIR" id="S44782">
    <property type="entry name" value="S44782"/>
</dbReference>
<dbReference type="RefSeq" id="NP_498870.2">
    <property type="nucleotide sequence ID" value="NM_066469.6"/>
</dbReference>
<dbReference type="SMR" id="Q04907"/>
<dbReference type="FunCoup" id="Q04907">
    <property type="interactions" value="1187"/>
</dbReference>
<dbReference type="STRING" id="6239.C30C11.1.1"/>
<dbReference type="PaxDb" id="6239-C30C11.1"/>
<dbReference type="PeptideAtlas" id="Q04907"/>
<dbReference type="EnsemblMetazoa" id="C30C11.1.1">
    <property type="protein sequence ID" value="C30C11.1.1"/>
    <property type="gene ID" value="WBGene00016249"/>
</dbReference>
<dbReference type="GeneID" id="176197"/>
<dbReference type="KEGG" id="cel:CELE_C30C11.1"/>
<dbReference type="UCSC" id="C30C11.1">
    <property type="organism name" value="c. elegans"/>
</dbReference>
<dbReference type="AGR" id="WB:WBGene00016249"/>
<dbReference type="CTD" id="176197"/>
<dbReference type="WormBase" id="C30C11.1">
    <property type="protein sequence ID" value="CE48620"/>
    <property type="gene ID" value="WBGene00016249"/>
    <property type="gene designation" value="mrpl-32"/>
</dbReference>
<dbReference type="eggNOG" id="KOG4080">
    <property type="taxonomic scope" value="Eukaryota"/>
</dbReference>
<dbReference type="GeneTree" id="ENSGT00390000014996"/>
<dbReference type="HOGENOM" id="CLU_116455_0_0_1"/>
<dbReference type="InParanoid" id="Q04907"/>
<dbReference type="OMA" id="VPKIRTC"/>
<dbReference type="OrthoDB" id="2014905at2759"/>
<dbReference type="Reactome" id="R-CEL-5389840">
    <property type="pathway name" value="Mitochondrial translation elongation"/>
</dbReference>
<dbReference type="Reactome" id="R-CEL-5419276">
    <property type="pathway name" value="Mitochondrial translation termination"/>
</dbReference>
<dbReference type="Reactome" id="R-CEL-9837999">
    <property type="pathway name" value="Mitochondrial protein degradation"/>
</dbReference>
<dbReference type="PRO" id="PR:Q04907"/>
<dbReference type="Proteomes" id="UP000001940">
    <property type="component" value="Chromosome III"/>
</dbReference>
<dbReference type="Bgee" id="WBGene00016249">
    <property type="expression patterns" value="Expressed in larva and 4 other cell types or tissues"/>
</dbReference>
<dbReference type="GO" id="GO:0005762">
    <property type="term" value="C:mitochondrial large ribosomal subunit"/>
    <property type="evidence" value="ECO:0000318"/>
    <property type="project" value="GO_Central"/>
</dbReference>
<dbReference type="GO" id="GO:0046872">
    <property type="term" value="F:metal ion binding"/>
    <property type="evidence" value="ECO:0007669"/>
    <property type="project" value="UniProtKB-KW"/>
</dbReference>
<dbReference type="GO" id="GO:0003735">
    <property type="term" value="F:structural constituent of ribosome"/>
    <property type="evidence" value="ECO:0000318"/>
    <property type="project" value="GO_Central"/>
</dbReference>
<dbReference type="GO" id="GO:0006412">
    <property type="term" value="P:translation"/>
    <property type="evidence" value="ECO:0007669"/>
    <property type="project" value="InterPro"/>
</dbReference>
<dbReference type="InterPro" id="IPR051991">
    <property type="entry name" value="Mitoribosomal_protein_bL32"/>
</dbReference>
<dbReference type="InterPro" id="IPR002677">
    <property type="entry name" value="Ribosomal_bL32"/>
</dbReference>
<dbReference type="InterPro" id="IPR011332">
    <property type="entry name" value="Ribosomal_zn-bd"/>
</dbReference>
<dbReference type="PANTHER" id="PTHR21026">
    <property type="entry name" value="39S RIBOSOMAL PROTEIN L32, MITOCHONDRIAL"/>
    <property type="match status" value="1"/>
</dbReference>
<dbReference type="PANTHER" id="PTHR21026:SF2">
    <property type="entry name" value="LARGE RIBOSOMAL SUBUNIT PROTEIN BL32M"/>
    <property type="match status" value="1"/>
</dbReference>
<dbReference type="Pfam" id="PF01783">
    <property type="entry name" value="Ribosomal_L32p"/>
    <property type="match status" value="1"/>
</dbReference>
<dbReference type="SUPFAM" id="SSF57829">
    <property type="entry name" value="Zn-binding ribosomal proteins"/>
    <property type="match status" value="1"/>
</dbReference>
<name>RM32_CAEEL</name>
<keyword id="KW-0479">Metal-binding</keyword>
<keyword id="KW-0496">Mitochondrion</keyword>
<keyword id="KW-1185">Reference proteome</keyword>
<keyword id="KW-0687">Ribonucleoprotein</keyword>
<keyword id="KW-0689">Ribosomal protein</keyword>
<keyword id="KW-0809">Transit peptide</keyword>
<keyword id="KW-0862">Zinc</keyword>
<gene>
    <name type="primary">mrpl-32</name>
    <name type="ORF">C30C11.1</name>
</gene>
<feature type="transit peptide" description="Mitochondrion" evidence="2">
    <location>
        <begin position="1"/>
        <end status="unknown"/>
    </location>
</feature>
<feature type="chain" id="PRO_0000030516" description="Large ribosomal subunit protein bL32m">
    <location>
        <begin status="unknown"/>
        <end position="183"/>
    </location>
</feature>
<feature type="binding site" evidence="1">
    <location>
        <position position="99"/>
    </location>
    <ligand>
        <name>Zn(2+)</name>
        <dbReference type="ChEBI" id="CHEBI:29105"/>
    </ligand>
</feature>
<feature type="binding site" evidence="1">
    <location>
        <position position="102"/>
    </location>
    <ligand>
        <name>Zn(2+)</name>
        <dbReference type="ChEBI" id="CHEBI:29105"/>
    </ligand>
</feature>
<feature type="binding site" evidence="1">
    <location>
        <position position="112"/>
    </location>
    <ligand>
        <name>Zn(2+)</name>
        <dbReference type="ChEBI" id="CHEBI:29105"/>
    </ligand>
</feature>
<feature type="binding site" evidence="1">
    <location>
        <position position="115"/>
    </location>
    <ligand>
        <name>Zn(2+)</name>
        <dbReference type="ChEBI" id="CHEBI:29105"/>
    </ligand>
</feature>
<accession>Q04907</accession>
<organism>
    <name type="scientific">Caenorhabditis elegans</name>
    <dbReference type="NCBI Taxonomy" id="6239"/>
    <lineage>
        <taxon>Eukaryota</taxon>
        <taxon>Metazoa</taxon>
        <taxon>Ecdysozoa</taxon>
        <taxon>Nematoda</taxon>
        <taxon>Chromadorea</taxon>
        <taxon>Rhabditida</taxon>
        <taxon>Rhabditina</taxon>
        <taxon>Rhabditomorpha</taxon>
        <taxon>Rhabditoidea</taxon>
        <taxon>Rhabditidae</taxon>
        <taxon>Peloderinae</taxon>
        <taxon>Caenorhabditis</taxon>
    </lineage>
</organism>
<comment type="function">
    <text evidence="1">Component of the mitochondrial large ribosomal subunit (mt-LSU). The mitochondrial ribosome (mitoribosome) is a large ribonucleoprotein complex responsible for the synthesis of proteins inside mitochondria.</text>
</comment>
<comment type="subunit">
    <text evidence="1">Component of the mitochondrial large ribosomal subunit (mt-LSU).</text>
</comment>
<comment type="subcellular location">
    <subcellularLocation>
        <location evidence="1">Mitochondrion</location>
    </subcellularLocation>
</comment>
<comment type="similarity">
    <text evidence="3">Belongs to the bacterial ribosomal protein bL32 family.</text>
</comment>
<reference key="1">
    <citation type="journal article" date="1994" name="Nature">
        <title>2.2 Mb of contiguous nucleotide sequence from chromosome III of C. elegans.</title>
        <authorList>
            <person name="Wilson R."/>
            <person name="Ainscough R."/>
            <person name="Anderson K."/>
            <person name="Baynes C."/>
            <person name="Berks M."/>
            <person name="Bonfield J."/>
            <person name="Burton J."/>
            <person name="Connell M."/>
            <person name="Copsey T."/>
            <person name="Cooper J."/>
            <person name="Coulson A."/>
            <person name="Craxton M."/>
            <person name="Dear S."/>
            <person name="Du Z."/>
            <person name="Durbin R."/>
            <person name="Favello A."/>
            <person name="Fraser A."/>
            <person name="Fulton L."/>
            <person name="Gardner A."/>
            <person name="Green P."/>
            <person name="Hawkins T."/>
            <person name="Hillier L."/>
            <person name="Jier M."/>
            <person name="Johnston L."/>
            <person name="Jones M."/>
            <person name="Kershaw J."/>
            <person name="Kirsten J."/>
            <person name="Laisster N."/>
            <person name="Latreille P."/>
            <person name="Lightning J."/>
            <person name="Lloyd C."/>
            <person name="Mortimore B."/>
            <person name="O'Callaghan M."/>
            <person name="Parsons J."/>
            <person name="Percy C."/>
            <person name="Rifken L."/>
            <person name="Roopra A."/>
            <person name="Saunders D."/>
            <person name="Shownkeen R."/>
            <person name="Sims M."/>
            <person name="Smaldon N."/>
            <person name="Smith A."/>
            <person name="Smith M."/>
            <person name="Sonnhammer E."/>
            <person name="Staden R."/>
            <person name="Sulston J."/>
            <person name="Thierry-Mieg J."/>
            <person name="Thomas K."/>
            <person name="Vaudin M."/>
            <person name="Vaughan K."/>
            <person name="Waterston R."/>
            <person name="Watson A."/>
            <person name="Weinstock L."/>
            <person name="Wilkinson-Sproat J."/>
            <person name="Wohldman P."/>
        </authorList>
    </citation>
    <scope>NUCLEOTIDE SEQUENCE [LARGE SCALE GENOMIC DNA]</scope>
    <source>
        <strain>Bristol N2</strain>
    </source>
</reference>
<reference key="2">
    <citation type="journal article" date="1998" name="Science">
        <title>Genome sequence of the nematode C. elegans: a platform for investigating biology.</title>
        <authorList>
            <consortium name="The C. elegans sequencing consortium"/>
        </authorList>
    </citation>
    <scope>NUCLEOTIDE SEQUENCE [LARGE SCALE GENOMIC DNA]</scope>
    <source>
        <strain>Bristol N2</strain>
    </source>
</reference>